<proteinExistence type="inferred from homology"/>
<evidence type="ECO:0000255" key="1">
    <source>
        <dbReference type="HAMAP-Rule" id="MF_01342"/>
    </source>
</evidence>
<evidence type="ECO:0000305" key="2"/>
<sequence length="134" mass="15390">MLSPKRTKFRKPHRGRLRGIATRGNTLIFGDYGLQALEPIWLTSRQIEATRRTITRQVKRVGRLWIRVFPDKSISAKPPETRMGAGKGAPEYWVAVIKPGHILFEINGVSQDLRYLAFKNASYKLPIKTKFISR</sequence>
<comment type="subunit">
    <text evidence="1">Part of the 50S ribosomal subunit.</text>
</comment>
<comment type="subcellular location">
    <subcellularLocation>
        <location>Plastid</location>
        <location>Chloroplast</location>
    </subcellularLocation>
</comment>
<comment type="similarity">
    <text evidence="1">Belongs to the universal ribosomal protein uL16 family.</text>
</comment>
<protein>
    <recommendedName>
        <fullName evidence="1">Large ribosomal subunit protein uL16c</fullName>
    </recommendedName>
    <alternativeName>
        <fullName evidence="2">50S ribosomal protein L16, chloroplastic</fullName>
    </alternativeName>
</protein>
<feature type="chain" id="PRO_0000062285" description="Large ribosomal subunit protein uL16c">
    <location>
        <begin position="1"/>
        <end position="134"/>
    </location>
</feature>
<geneLocation type="chloroplast"/>
<dbReference type="EMBL" id="AF041468">
    <property type="protein sequence ID" value="AAC35710.1"/>
    <property type="molecule type" value="Genomic_DNA"/>
</dbReference>
<dbReference type="RefSeq" id="NP_050776.1">
    <property type="nucleotide sequence ID" value="NC_000926.1"/>
</dbReference>
<dbReference type="SMR" id="O46901"/>
<dbReference type="GeneID" id="857084"/>
<dbReference type="HOGENOM" id="CLU_078858_2_1_1"/>
<dbReference type="OMA" id="KGAVEYW"/>
<dbReference type="GO" id="GO:0009507">
    <property type="term" value="C:chloroplast"/>
    <property type="evidence" value="ECO:0007669"/>
    <property type="project" value="UniProtKB-SubCell"/>
</dbReference>
<dbReference type="GO" id="GO:0005762">
    <property type="term" value="C:mitochondrial large ribosomal subunit"/>
    <property type="evidence" value="ECO:0007669"/>
    <property type="project" value="TreeGrafter"/>
</dbReference>
<dbReference type="GO" id="GO:0019843">
    <property type="term" value="F:rRNA binding"/>
    <property type="evidence" value="ECO:0007669"/>
    <property type="project" value="InterPro"/>
</dbReference>
<dbReference type="GO" id="GO:0003735">
    <property type="term" value="F:structural constituent of ribosome"/>
    <property type="evidence" value="ECO:0007669"/>
    <property type="project" value="InterPro"/>
</dbReference>
<dbReference type="GO" id="GO:0032543">
    <property type="term" value="P:mitochondrial translation"/>
    <property type="evidence" value="ECO:0007669"/>
    <property type="project" value="TreeGrafter"/>
</dbReference>
<dbReference type="CDD" id="cd01433">
    <property type="entry name" value="Ribosomal_L16_L10e"/>
    <property type="match status" value="1"/>
</dbReference>
<dbReference type="FunFam" id="3.90.1170.10:FF:000001">
    <property type="entry name" value="50S ribosomal protein L16"/>
    <property type="match status" value="1"/>
</dbReference>
<dbReference type="Gene3D" id="3.90.1170.10">
    <property type="entry name" value="Ribosomal protein L10e/L16"/>
    <property type="match status" value="1"/>
</dbReference>
<dbReference type="HAMAP" id="MF_01342">
    <property type="entry name" value="Ribosomal_uL16"/>
    <property type="match status" value="1"/>
</dbReference>
<dbReference type="InterPro" id="IPR047873">
    <property type="entry name" value="Ribosomal_uL16"/>
</dbReference>
<dbReference type="InterPro" id="IPR000114">
    <property type="entry name" value="Ribosomal_uL16_bact-type"/>
</dbReference>
<dbReference type="InterPro" id="IPR020798">
    <property type="entry name" value="Ribosomal_uL16_CS"/>
</dbReference>
<dbReference type="InterPro" id="IPR016180">
    <property type="entry name" value="Ribosomal_uL16_dom"/>
</dbReference>
<dbReference type="InterPro" id="IPR036920">
    <property type="entry name" value="Ribosomal_uL16_sf"/>
</dbReference>
<dbReference type="NCBIfam" id="TIGR01164">
    <property type="entry name" value="rplP_bact"/>
    <property type="match status" value="1"/>
</dbReference>
<dbReference type="PANTHER" id="PTHR12220">
    <property type="entry name" value="50S/60S RIBOSOMAL PROTEIN L16"/>
    <property type="match status" value="1"/>
</dbReference>
<dbReference type="PANTHER" id="PTHR12220:SF13">
    <property type="entry name" value="LARGE RIBOSOMAL SUBUNIT PROTEIN UL16M"/>
    <property type="match status" value="1"/>
</dbReference>
<dbReference type="Pfam" id="PF00252">
    <property type="entry name" value="Ribosomal_L16"/>
    <property type="match status" value="1"/>
</dbReference>
<dbReference type="PRINTS" id="PR00060">
    <property type="entry name" value="RIBOSOMALL16"/>
</dbReference>
<dbReference type="SUPFAM" id="SSF54686">
    <property type="entry name" value="Ribosomal protein L16p/L10e"/>
    <property type="match status" value="1"/>
</dbReference>
<dbReference type="PROSITE" id="PS00586">
    <property type="entry name" value="RIBOSOMAL_L16_1"/>
    <property type="match status" value="1"/>
</dbReference>
<dbReference type="PROSITE" id="PS00701">
    <property type="entry name" value="RIBOSOMAL_L16_2"/>
    <property type="match status" value="1"/>
</dbReference>
<gene>
    <name evidence="1" type="primary">rpl16</name>
</gene>
<keyword id="KW-0150">Chloroplast</keyword>
<keyword id="KW-0934">Plastid</keyword>
<keyword id="KW-0687">Ribonucleoprotein</keyword>
<keyword id="KW-0689">Ribosomal protein</keyword>
<name>RK16_GUITH</name>
<accession>O46901</accession>
<organism>
    <name type="scientific">Guillardia theta</name>
    <name type="common">Cryptophyte</name>
    <name type="synonym">Cryptomonas phi</name>
    <dbReference type="NCBI Taxonomy" id="55529"/>
    <lineage>
        <taxon>Eukaryota</taxon>
        <taxon>Cryptophyceae</taxon>
        <taxon>Pyrenomonadales</taxon>
        <taxon>Geminigeraceae</taxon>
        <taxon>Guillardia</taxon>
    </lineage>
</organism>
<reference key="1">
    <citation type="journal article" date="1997" name="Biochem. Mol. Biol. Int.">
        <title>The large ribosomal protein gene cluster of a cryptomonad plastid: gene organization, sequence and evolutionary implications.</title>
        <authorList>
            <person name="Wang S.L."/>
            <person name="Liu X.-Q."/>
            <person name="Douglas S.E."/>
        </authorList>
    </citation>
    <scope>NUCLEOTIDE SEQUENCE [GENOMIC DNA]</scope>
</reference>
<reference key="2">
    <citation type="journal article" date="1999" name="J. Mol. Evol.">
        <title>The plastid genome of the cryptophyte alga, Guillardia theta: complete sequence and conserved synteny groups confirm its common ancestry with red algae.</title>
        <authorList>
            <person name="Douglas S.E."/>
            <person name="Penny S.L."/>
        </authorList>
    </citation>
    <scope>NUCLEOTIDE SEQUENCE [LARGE SCALE GENOMIC DNA]</scope>
</reference>